<gene>
    <name evidence="1" type="primary">tusD</name>
    <name type="ordered locus">KPN78578_36930</name>
    <name type="ORF">KPN_03730</name>
</gene>
<keyword id="KW-0963">Cytoplasm</keyword>
<keyword id="KW-0808">Transferase</keyword>
<keyword id="KW-0819">tRNA processing</keyword>
<sequence>MRFALTVTGPAYGTQQASSAWQFAQAVLQEGHELACVFFYREGVLNANQLTAPASDEFDLVRGWQSLHDEHGVALHICVAAALRRGVTDEREAQQLALPGHNLQPGFTLSGLGALAEAALTCDRMVQF</sequence>
<evidence type="ECO:0000255" key="1">
    <source>
        <dbReference type="HAMAP-Rule" id="MF_00390"/>
    </source>
</evidence>
<accession>A6TEY3</accession>
<organism>
    <name type="scientific">Klebsiella pneumoniae subsp. pneumoniae (strain ATCC 700721 / MGH 78578)</name>
    <dbReference type="NCBI Taxonomy" id="272620"/>
    <lineage>
        <taxon>Bacteria</taxon>
        <taxon>Pseudomonadati</taxon>
        <taxon>Pseudomonadota</taxon>
        <taxon>Gammaproteobacteria</taxon>
        <taxon>Enterobacterales</taxon>
        <taxon>Enterobacteriaceae</taxon>
        <taxon>Klebsiella/Raoultella group</taxon>
        <taxon>Klebsiella</taxon>
        <taxon>Klebsiella pneumoniae complex</taxon>
    </lineage>
</organism>
<feature type="chain" id="PRO_1000013255" description="Sulfurtransferase TusD">
    <location>
        <begin position="1"/>
        <end position="128"/>
    </location>
</feature>
<feature type="active site" description="Cysteine persulfide intermediate" evidence="1">
    <location>
        <position position="78"/>
    </location>
</feature>
<dbReference type="EC" id="2.8.1.-" evidence="1"/>
<dbReference type="EMBL" id="CP000647">
    <property type="protein sequence ID" value="ABR79117.1"/>
    <property type="molecule type" value="Genomic_DNA"/>
</dbReference>
<dbReference type="RefSeq" id="WP_002920128.1">
    <property type="nucleotide sequence ID" value="NC_009648.1"/>
</dbReference>
<dbReference type="SMR" id="A6TEY3"/>
<dbReference type="STRING" id="272620.KPN_03730"/>
<dbReference type="PaxDb" id="272620-KPN_03730"/>
<dbReference type="EnsemblBacteria" id="ABR79117">
    <property type="protein sequence ID" value="ABR79117"/>
    <property type="gene ID" value="KPN_03730"/>
</dbReference>
<dbReference type="GeneID" id="93251058"/>
<dbReference type="KEGG" id="kpn:KPN_03730"/>
<dbReference type="HOGENOM" id="CLU_132095_0_0_6"/>
<dbReference type="Proteomes" id="UP000000265">
    <property type="component" value="Chromosome"/>
</dbReference>
<dbReference type="GO" id="GO:1990228">
    <property type="term" value="C:sulfurtransferase complex"/>
    <property type="evidence" value="ECO:0007669"/>
    <property type="project" value="TreeGrafter"/>
</dbReference>
<dbReference type="GO" id="GO:0097163">
    <property type="term" value="F:sulfur carrier activity"/>
    <property type="evidence" value="ECO:0007669"/>
    <property type="project" value="TreeGrafter"/>
</dbReference>
<dbReference type="GO" id="GO:0016783">
    <property type="term" value="F:sulfurtransferase activity"/>
    <property type="evidence" value="ECO:0007669"/>
    <property type="project" value="UniProtKB-UniRule"/>
</dbReference>
<dbReference type="GO" id="GO:0002143">
    <property type="term" value="P:tRNA wobble position uridine thiolation"/>
    <property type="evidence" value="ECO:0007669"/>
    <property type="project" value="TreeGrafter"/>
</dbReference>
<dbReference type="FunFam" id="3.40.1260.10:FF:000001">
    <property type="entry name" value="Sulfurtransferase TusD"/>
    <property type="match status" value="1"/>
</dbReference>
<dbReference type="Gene3D" id="3.40.1260.10">
    <property type="entry name" value="DsrEFH-like"/>
    <property type="match status" value="1"/>
</dbReference>
<dbReference type="HAMAP" id="MF_00390">
    <property type="entry name" value="Thiourid_synth_D"/>
    <property type="match status" value="1"/>
</dbReference>
<dbReference type="InterPro" id="IPR027396">
    <property type="entry name" value="DsrEFH-like"/>
</dbReference>
<dbReference type="InterPro" id="IPR003787">
    <property type="entry name" value="Sulphur_relay_DsrE/F-like"/>
</dbReference>
<dbReference type="InterPro" id="IPR017463">
    <property type="entry name" value="Sulphur_relay_TusD/DsrE"/>
</dbReference>
<dbReference type="NCBIfam" id="NF001237">
    <property type="entry name" value="PRK00207.1"/>
    <property type="match status" value="1"/>
</dbReference>
<dbReference type="NCBIfam" id="TIGR03012">
    <property type="entry name" value="sulf_tusD_dsrE"/>
    <property type="match status" value="1"/>
</dbReference>
<dbReference type="PANTHER" id="PTHR34874">
    <property type="entry name" value="PROTEIN YCHN"/>
    <property type="match status" value="1"/>
</dbReference>
<dbReference type="PANTHER" id="PTHR34874:SF3">
    <property type="entry name" value="SULFURTRANSFERASE TUSD"/>
    <property type="match status" value="1"/>
</dbReference>
<dbReference type="Pfam" id="PF02635">
    <property type="entry name" value="DsrE"/>
    <property type="match status" value="1"/>
</dbReference>
<dbReference type="SUPFAM" id="SSF75169">
    <property type="entry name" value="DsrEFH-like"/>
    <property type="match status" value="1"/>
</dbReference>
<name>TUSD_KLEP7</name>
<comment type="function">
    <text evidence="1">Part of a sulfur-relay system required for 2-thiolation of 5-methylaminomethyl-2-thiouridine (mnm(5)s(2)U) at tRNA wobble positions. Accepts sulfur from TusA and transfers it in turn to TusE.</text>
</comment>
<comment type="subunit">
    <text evidence="1">Heterohexamer, formed by a dimer of trimers. The hexameric TusBCD complex contains 2 copies each of TusB, TusC and TusD. The TusBCD complex interacts with TusE.</text>
</comment>
<comment type="subcellular location">
    <subcellularLocation>
        <location evidence="1">Cytoplasm</location>
    </subcellularLocation>
</comment>
<comment type="similarity">
    <text evidence="1">Belongs to the DsrE/TusD family.</text>
</comment>
<protein>
    <recommendedName>
        <fullName evidence="1">Sulfurtransferase TusD</fullName>
        <ecNumber evidence="1">2.8.1.-</ecNumber>
    </recommendedName>
    <alternativeName>
        <fullName evidence="1">tRNA 2-thiouridine synthesizing protein D</fullName>
    </alternativeName>
</protein>
<reference key="1">
    <citation type="submission" date="2006-09" db="EMBL/GenBank/DDBJ databases">
        <authorList>
            <consortium name="The Klebsiella pneumonia Genome Sequencing Project"/>
            <person name="McClelland M."/>
            <person name="Sanderson E.K."/>
            <person name="Spieth J."/>
            <person name="Clifton W.S."/>
            <person name="Latreille P."/>
            <person name="Sabo A."/>
            <person name="Pepin K."/>
            <person name="Bhonagiri V."/>
            <person name="Porwollik S."/>
            <person name="Ali J."/>
            <person name="Wilson R.K."/>
        </authorList>
    </citation>
    <scope>NUCLEOTIDE SEQUENCE [LARGE SCALE GENOMIC DNA]</scope>
    <source>
        <strain>ATCC 700721 / MGH 78578</strain>
    </source>
</reference>
<proteinExistence type="inferred from homology"/>